<protein>
    <recommendedName>
        <fullName evidence="1">ATP-dependent protease subunit HslV</fullName>
        <ecNumber evidence="1">3.4.25.2</ecNumber>
    </recommendedName>
</protein>
<keyword id="KW-0021">Allosteric enzyme</keyword>
<keyword id="KW-0963">Cytoplasm</keyword>
<keyword id="KW-0378">Hydrolase</keyword>
<keyword id="KW-0479">Metal-binding</keyword>
<keyword id="KW-0645">Protease</keyword>
<keyword id="KW-0915">Sodium</keyword>
<keyword id="KW-0888">Threonine protease</keyword>
<organism>
    <name type="scientific">Shewanella halifaxensis (strain HAW-EB4)</name>
    <dbReference type="NCBI Taxonomy" id="458817"/>
    <lineage>
        <taxon>Bacteria</taxon>
        <taxon>Pseudomonadati</taxon>
        <taxon>Pseudomonadota</taxon>
        <taxon>Gammaproteobacteria</taxon>
        <taxon>Alteromonadales</taxon>
        <taxon>Shewanellaceae</taxon>
        <taxon>Shewanella</taxon>
    </lineage>
</organism>
<reference key="1">
    <citation type="submission" date="2008-01" db="EMBL/GenBank/DDBJ databases">
        <title>Complete sequence of Shewanella halifaxensis HAW-EB4.</title>
        <authorList>
            <consortium name="US DOE Joint Genome Institute"/>
            <person name="Copeland A."/>
            <person name="Lucas S."/>
            <person name="Lapidus A."/>
            <person name="Glavina del Rio T."/>
            <person name="Dalin E."/>
            <person name="Tice H."/>
            <person name="Bruce D."/>
            <person name="Goodwin L."/>
            <person name="Pitluck S."/>
            <person name="Sims D."/>
            <person name="Brettin T."/>
            <person name="Detter J.C."/>
            <person name="Han C."/>
            <person name="Kuske C.R."/>
            <person name="Schmutz J."/>
            <person name="Larimer F."/>
            <person name="Land M."/>
            <person name="Hauser L."/>
            <person name="Kyrpides N."/>
            <person name="Kim E."/>
            <person name="Zhao J.-S."/>
            <person name="Richardson P."/>
        </authorList>
    </citation>
    <scope>NUCLEOTIDE SEQUENCE [LARGE SCALE GENOMIC DNA]</scope>
    <source>
        <strain>HAW-EB4</strain>
    </source>
</reference>
<feature type="chain" id="PRO_1000078429" description="ATP-dependent protease subunit HslV">
    <location>
        <begin position="1"/>
        <end position="174"/>
    </location>
</feature>
<feature type="active site" evidence="1">
    <location>
        <position position="2"/>
    </location>
</feature>
<feature type="binding site" evidence="1">
    <location>
        <position position="157"/>
    </location>
    <ligand>
        <name>Na(+)</name>
        <dbReference type="ChEBI" id="CHEBI:29101"/>
    </ligand>
</feature>
<feature type="binding site" evidence="1">
    <location>
        <position position="160"/>
    </location>
    <ligand>
        <name>Na(+)</name>
        <dbReference type="ChEBI" id="CHEBI:29101"/>
    </ligand>
</feature>
<feature type="binding site" evidence="1">
    <location>
        <position position="163"/>
    </location>
    <ligand>
        <name>Na(+)</name>
        <dbReference type="ChEBI" id="CHEBI:29101"/>
    </ligand>
</feature>
<proteinExistence type="inferred from homology"/>
<comment type="function">
    <text evidence="1">Protease subunit of a proteasome-like degradation complex believed to be a general protein degrading machinery.</text>
</comment>
<comment type="catalytic activity">
    <reaction evidence="1">
        <text>ATP-dependent cleavage of peptide bonds with broad specificity.</text>
        <dbReference type="EC" id="3.4.25.2"/>
    </reaction>
</comment>
<comment type="activity regulation">
    <text evidence="1">Allosterically activated by HslU binding.</text>
</comment>
<comment type="subunit">
    <text evidence="1">A double ring-shaped homohexamer of HslV is capped on each side by a ring-shaped HslU homohexamer. The assembly of the HslU/HslV complex is dependent on binding of ATP.</text>
</comment>
<comment type="subcellular location">
    <subcellularLocation>
        <location evidence="1">Cytoplasm</location>
    </subcellularLocation>
</comment>
<comment type="similarity">
    <text evidence="1">Belongs to the peptidase T1B family. HslV subfamily.</text>
</comment>
<accession>B0TVV3</accession>
<gene>
    <name evidence="1" type="primary">hslV</name>
    <name type="ordered locus">Shal_3866</name>
</gene>
<name>HSLV_SHEHH</name>
<dbReference type="EC" id="3.4.25.2" evidence="1"/>
<dbReference type="EMBL" id="CP000931">
    <property type="protein sequence ID" value="ABZ78406.1"/>
    <property type="molecule type" value="Genomic_DNA"/>
</dbReference>
<dbReference type="RefSeq" id="WP_012278923.1">
    <property type="nucleotide sequence ID" value="NC_010334.1"/>
</dbReference>
<dbReference type="SMR" id="B0TVV3"/>
<dbReference type="STRING" id="458817.Shal_3866"/>
<dbReference type="MEROPS" id="T01.006"/>
<dbReference type="KEGG" id="shl:Shal_3866"/>
<dbReference type="eggNOG" id="COG5405">
    <property type="taxonomic scope" value="Bacteria"/>
</dbReference>
<dbReference type="HOGENOM" id="CLU_093872_1_0_6"/>
<dbReference type="OrthoDB" id="9804884at2"/>
<dbReference type="Proteomes" id="UP000001317">
    <property type="component" value="Chromosome"/>
</dbReference>
<dbReference type="GO" id="GO:0009376">
    <property type="term" value="C:HslUV protease complex"/>
    <property type="evidence" value="ECO:0007669"/>
    <property type="project" value="UniProtKB-UniRule"/>
</dbReference>
<dbReference type="GO" id="GO:0005839">
    <property type="term" value="C:proteasome core complex"/>
    <property type="evidence" value="ECO:0007669"/>
    <property type="project" value="InterPro"/>
</dbReference>
<dbReference type="GO" id="GO:0046872">
    <property type="term" value="F:metal ion binding"/>
    <property type="evidence" value="ECO:0007669"/>
    <property type="project" value="UniProtKB-KW"/>
</dbReference>
<dbReference type="GO" id="GO:0004298">
    <property type="term" value="F:threonine-type endopeptidase activity"/>
    <property type="evidence" value="ECO:0007669"/>
    <property type="project" value="UniProtKB-KW"/>
</dbReference>
<dbReference type="GO" id="GO:0051603">
    <property type="term" value="P:proteolysis involved in protein catabolic process"/>
    <property type="evidence" value="ECO:0007669"/>
    <property type="project" value="InterPro"/>
</dbReference>
<dbReference type="CDD" id="cd01913">
    <property type="entry name" value="protease_HslV"/>
    <property type="match status" value="1"/>
</dbReference>
<dbReference type="FunFam" id="3.60.20.10:FF:000002">
    <property type="entry name" value="ATP-dependent protease subunit HslV"/>
    <property type="match status" value="1"/>
</dbReference>
<dbReference type="Gene3D" id="3.60.20.10">
    <property type="entry name" value="Glutamine Phosphoribosylpyrophosphate, subunit 1, domain 1"/>
    <property type="match status" value="1"/>
</dbReference>
<dbReference type="HAMAP" id="MF_00248">
    <property type="entry name" value="HslV"/>
    <property type="match status" value="1"/>
</dbReference>
<dbReference type="InterPro" id="IPR022281">
    <property type="entry name" value="ATP-dep_Prtase_HsIV_su"/>
</dbReference>
<dbReference type="InterPro" id="IPR029055">
    <property type="entry name" value="Ntn_hydrolases_N"/>
</dbReference>
<dbReference type="InterPro" id="IPR001353">
    <property type="entry name" value="Proteasome_sua/b"/>
</dbReference>
<dbReference type="InterPro" id="IPR023333">
    <property type="entry name" value="Proteasome_suB-type"/>
</dbReference>
<dbReference type="NCBIfam" id="TIGR03692">
    <property type="entry name" value="ATP_dep_HslV"/>
    <property type="match status" value="1"/>
</dbReference>
<dbReference type="NCBIfam" id="NF003964">
    <property type="entry name" value="PRK05456.1"/>
    <property type="match status" value="1"/>
</dbReference>
<dbReference type="PANTHER" id="PTHR32194:SF0">
    <property type="entry name" value="ATP-DEPENDENT PROTEASE SUBUNIT HSLV"/>
    <property type="match status" value="1"/>
</dbReference>
<dbReference type="PANTHER" id="PTHR32194">
    <property type="entry name" value="METALLOPROTEASE TLDD"/>
    <property type="match status" value="1"/>
</dbReference>
<dbReference type="Pfam" id="PF00227">
    <property type="entry name" value="Proteasome"/>
    <property type="match status" value="1"/>
</dbReference>
<dbReference type="PIRSF" id="PIRSF039093">
    <property type="entry name" value="HslV"/>
    <property type="match status" value="1"/>
</dbReference>
<dbReference type="SUPFAM" id="SSF56235">
    <property type="entry name" value="N-terminal nucleophile aminohydrolases (Ntn hydrolases)"/>
    <property type="match status" value="1"/>
</dbReference>
<dbReference type="PROSITE" id="PS51476">
    <property type="entry name" value="PROTEASOME_BETA_2"/>
    <property type="match status" value="1"/>
</dbReference>
<evidence type="ECO:0000255" key="1">
    <source>
        <dbReference type="HAMAP-Rule" id="MF_00248"/>
    </source>
</evidence>
<sequence length="174" mass="18783">MTTIVSVRRNNQVVIAGDGQVSLGNTVMKGNARKVRRLYHNKVLAGFAGGTADAFTLFERFEAKLEMHQGHLMRAAVEMAKDWRSDKVLRKLEALLAVADAESSLIITGNGDVVQPENDLIAIGSGGAFAQSAATALLENTDLSALEIAEKSLTIAGDICVFTNQFKTIEELKY</sequence>